<keyword id="KW-0150">Chloroplast</keyword>
<keyword id="KW-0934">Plastid</keyword>
<keyword id="KW-1185">Reference proteome</keyword>
<keyword id="KW-0687">Ribonucleoprotein</keyword>
<keyword id="KW-0689">Ribosomal protein</keyword>
<reference key="1">
    <citation type="journal article" date="2007" name="Theor. Appl. Genet.">
        <title>Complete chloroplast genome sequences of Hordeum vulgare, Sorghum bicolor and Agrostis stolonifera, and comparative analyses with other grass genomes.</title>
        <authorList>
            <person name="Saski C."/>
            <person name="Lee S.-B."/>
            <person name="Fjellheim S."/>
            <person name="Guda C."/>
            <person name="Jansen R.K."/>
            <person name="Luo H."/>
            <person name="Tomkins J."/>
            <person name="Rognli O.A."/>
            <person name="Daniell H."/>
            <person name="Clarke J.L."/>
        </authorList>
    </citation>
    <scope>NUCLEOTIDE SEQUENCE [LARGE SCALE GENOMIC DNA]</scope>
    <source>
        <strain>cv. BTx623</strain>
    </source>
</reference>
<feature type="chain" id="PRO_0000276488" description="Large ribosomal subunit protein bL32c">
    <location>
        <begin position="1"/>
        <end position="59"/>
    </location>
</feature>
<feature type="region of interest" description="Disordered" evidence="2">
    <location>
        <begin position="37"/>
        <end position="59"/>
    </location>
</feature>
<geneLocation type="chloroplast"/>
<dbReference type="EMBL" id="EF115542">
    <property type="protein sequence ID" value="ABK79544.1"/>
    <property type="molecule type" value="Genomic_DNA"/>
</dbReference>
<dbReference type="RefSeq" id="YP_899455.1">
    <property type="nucleotide sequence ID" value="NC_008602.1"/>
</dbReference>
<dbReference type="SMR" id="A1E9X2"/>
<dbReference type="FunCoup" id="A1E9X2">
    <property type="interactions" value="370"/>
</dbReference>
<dbReference type="STRING" id="4558.A1E9X2"/>
<dbReference type="GeneID" id="4549149"/>
<dbReference type="KEGG" id="sbi:4549149"/>
<dbReference type="eggNOG" id="ENOG502SANY">
    <property type="taxonomic scope" value="Eukaryota"/>
</dbReference>
<dbReference type="InParanoid" id="A1E9X2"/>
<dbReference type="OrthoDB" id="671523at2759"/>
<dbReference type="Proteomes" id="UP000000768">
    <property type="component" value="Chloroplast"/>
</dbReference>
<dbReference type="ExpressionAtlas" id="A1E9X2">
    <property type="expression patterns" value="baseline"/>
</dbReference>
<dbReference type="GO" id="GO:0009507">
    <property type="term" value="C:chloroplast"/>
    <property type="evidence" value="ECO:0007669"/>
    <property type="project" value="UniProtKB-SubCell"/>
</dbReference>
<dbReference type="GO" id="GO:0015934">
    <property type="term" value="C:large ribosomal subunit"/>
    <property type="evidence" value="ECO:0007669"/>
    <property type="project" value="InterPro"/>
</dbReference>
<dbReference type="GO" id="GO:0003735">
    <property type="term" value="F:structural constituent of ribosome"/>
    <property type="evidence" value="ECO:0007669"/>
    <property type="project" value="InterPro"/>
</dbReference>
<dbReference type="GO" id="GO:0006412">
    <property type="term" value="P:translation"/>
    <property type="evidence" value="ECO:0007669"/>
    <property type="project" value="UniProtKB-UniRule"/>
</dbReference>
<dbReference type="HAMAP" id="MF_00340">
    <property type="entry name" value="Ribosomal_bL32"/>
    <property type="match status" value="1"/>
</dbReference>
<dbReference type="InterPro" id="IPR002677">
    <property type="entry name" value="Ribosomal_bL32"/>
</dbReference>
<dbReference type="InterPro" id="IPR044958">
    <property type="entry name" value="Ribosomal_bL32_plant/cyanobact"/>
</dbReference>
<dbReference type="InterPro" id="IPR011332">
    <property type="entry name" value="Ribosomal_zn-bd"/>
</dbReference>
<dbReference type="PANTHER" id="PTHR36083">
    <property type="entry name" value="50S RIBOSOMAL PROTEIN L32, CHLOROPLASTIC"/>
    <property type="match status" value="1"/>
</dbReference>
<dbReference type="PANTHER" id="PTHR36083:SF1">
    <property type="entry name" value="LARGE RIBOSOMAL SUBUNIT PROTEIN BL32C"/>
    <property type="match status" value="1"/>
</dbReference>
<dbReference type="Pfam" id="PF01783">
    <property type="entry name" value="Ribosomal_L32p"/>
    <property type="match status" value="1"/>
</dbReference>
<dbReference type="SUPFAM" id="SSF57829">
    <property type="entry name" value="Zn-binding ribosomal proteins"/>
    <property type="match status" value="1"/>
</dbReference>
<sequence length="59" mass="6790">MAVPKKRTSMSKKRIRKNLWKKKTYFSIVQSYSLAKSRSFSSGNEHPKPKGFSGQQANK</sequence>
<accession>A1E9X2</accession>
<proteinExistence type="inferred from homology"/>
<protein>
    <recommendedName>
        <fullName evidence="1">Large ribosomal subunit protein bL32c</fullName>
    </recommendedName>
    <alternativeName>
        <fullName evidence="3">50S ribosomal protein L32, chloroplastic</fullName>
    </alternativeName>
</protein>
<comment type="subcellular location">
    <subcellularLocation>
        <location>Plastid</location>
        <location>Chloroplast</location>
    </subcellularLocation>
</comment>
<comment type="similarity">
    <text evidence="1">Belongs to the bacterial ribosomal protein bL32 family.</text>
</comment>
<evidence type="ECO:0000255" key="1">
    <source>
        <dbReference type="HAMAP-Rule" id="MF_00340"/>
    </source>
</evidence>
<evidence type="ECO:0000256" key="2">
    <source>
        <dbReference type="SAM" id="MobiDB-lite"/>
    </source>
</evidence>
<evidence type="ECO:0000305" key="3"/>
<name>RK32_SORBI</name>
<gene>
    <name evidence="1" type="primary">rpl32</name>
</gene>
<organism>
    <name type="scientific">Sorghum bicolor</name>
    <name type="common">Sorghum</name>
    <name type="synonym">Sorghum vulgare</name>
    <dbReference type="NCBI Taxonomy" id="4558"/>
    <lineage>
        <taxon>Eukaryota</taxon>
        <taxon>Viridiplantae</taxon>
        <taxon>Streptophyta</taxon>
        <taxon>Embryophyta</taxon>
        <taxon>Tracheophyta</taxon>
        <taxon>Spermatophyta</taxon>
        <taxon>Magnoliopsida</taxon>
        <taxon>Liliopsida</taxon>
        <taxon>Poales</taxon>
        <taxon>Poaceae</taxon>
        <taxon>PACMAD clade</taxon>
        <taxon>Panicoideae</taxon>
        <taxon>Andropogonodae</taxon>
        <taxon>Andropogoneae</taxon>
        <taxon>Sorghinae</taxon>
        <taxon>Sorghum</taxon>
    </lineage>
</organism>